<accession>B1KNS7</accession>
<feature type="chain" id="PRO_1000213720" description="tRNA(Ile)-lysidine synthase">
    <location>
        <begin position="1"/>
        <end position="470"/>
    </location>
</feature>
<feature type="binding site" evidence="1">
    <location>
        <begin position="32"/>
        <end position="37"/>
    </location>
    <ligand>
        <name>ATP</name>
        <dbReference type="ChEBI" id="CHEBI:30616"/>
    </ligand>
</feature>
<organism>
    <name type="scientific">Shewanella woodyi (strain ATCC 51908 / MS32)</name>
    <dbReference type="NCBI Taxonomy" id="392500"/>
    <lineage>
        <taxon>Bacteria</taxon>
        <taxon>Pseudomonadati</taxon>
        <taxon>Pseudomonadota</taxon>
        <taxon>Gammaproteobacteria</taxon>
        <taxon>Alteromonadales</taxon>
        <taxon>Shewanellaceae</taxon>
        <taxon>Shewanella</taxon>
    </lineage>
</organism>
<gene>
    <name evidence="1" type="primary">tilS</name>
    <name type="ordered locus">Swoo_3265</name>
</gene>
<reference key="1">
    <citation type="submission" date="2008-02" db="EMBL/GenBank/DDBJ databases">
        <title>Complete sequence of Shewanella woodyi ATCC 51908.</title>
        <authorList>
            <consortium name="US DOE Joint Genome Institute"/>
            <person name="Copeland A."/>
            <person name="Lucas S."/>
            <person name="Lapidus A."/>
            <person name="Glavina del Rio T."/>
            <person name="Dalin E."/>
            <person name="Tice H."/>
            <person name="Bruce D."/>
            <person name="Goodwin L."/>
            <person name="Pitluck S."/>
            <person name="Sims D."/>
            <person name="Brettin T."/>
            <person name="Detter J.C."/>
            <person name="Han C."/>
            <person name="Kuske C.R."/>
            <person name="Schmutz J."/>
            <person name="Larimer F."/>
            <person name="Land M."/>
            <person name="Hauser L."/>
            <person name="Kyrpides N."/>
            <person name="Lykidis A."/>
            <person name="Zhao J.-S."/>
            <person name="Richardson P."/>
        </authorList>
    </citation>
    <scope>NUCLEOTIDE SEQUENCE [LARGE SCALE GENOMIC DNA]</scope>
    <source>
        <strain>ATCC 51908 / MS32</strain>
    </source>
</reference>
<dbReference type="EC" id="6.3.4.19" evidence="1"/>
<dbReference type="EMBL" id="CP000961">
    <property type="protein sequence ID" value="ACA87535.1"/>
    <property type="molecule type" value="Genomic_DNA"/>
</dbReference>
<dbReference type="RefSeq" id="WP_012325871.1">
    <property type="nucleotide sequence ID" value="NC_010506.1"/>
</dbReference>
<dbReference type="SMR" id="B1KNS7"/>
<dbReference type="STRING" id="392500.Swoo_3265"/>
<dbReference type="KEGG" id="swd:Swoo_3265"/>
<dbReference type="eggNOG" id="COG0037">
    <property type="taxonomic scope" value="Bacteria"/>
</dbReference>
<dbReference type="HOGENOM" id="CLU_018869_2_0_6"/>
<dbReference type="Proteomes" id="UP000002168">
    <property type="component" value="Chromosome"/>
</dbReference>
<dbReference type="GO" id="GO:0005737">
    <property type="term" value="C:cytoplasm"/>
    <property type="evidence" value="ECO:0007669"/>
    <property type="project" value="UniProtKB-SubCell"/>
</dbReference>
<dbReference type="GO" id="GO:0005524">
    <property type="term" value="F:ATP binding"/>
    <property type="evidence" value="ECO:0007669"/>
    <property type="project" value="UniProtKB-UniRule"/>
</dbReference>
<dbReference type="GO" id="GO:0032267">
    <property type="term" value="F:tRNA(Ile)-lysidine synthase activity"/>
    <property type="evidence" value="ECO:0007669"/>
    <property type="project" value="UniProtKB-EC"/>
</dbReference>
<dbReference type="GO" id="GO:0006400">
    <property type="term" value="P:tRNA modification"/>
    <property type="evidence" value="ECO:0007669"/>
    <property type="project" value="UniProtKB-UniRule"/>
</dbReference>
<dbReference type="CDD" id="cd01992">
    <property type="entry name" value="TilS_N"/>
    <property type="match status" value="1"/>
</dbReference>
<dbReference type="Gene3D" id="1.20.59.20">
    <property type="match status" value="1"/>
</dbReference>
<dbReference type="Gene3D" id="3.40.50.620">
    <property type="entry name" value="HUPs"/>
    <property type="match status" value="1"/>
</dbReference>
<dbReference type="HAMAP" id="MF_01161">
    <property type="entry name" value="tRNA_Ile_lys_synt"/>
    <property type="match status" value="1"/>
</dbReference>
<dbReference type="InterPro" id="IPR012796">
    <property type="entry name" value="Lysidine-tRNA-synth_C"/>
</dbReference>
<dbReference type="InterPro" id="IPR014729">
    <property type="entry name" value="Rossmann-like_a/b/a_fold"/>
</dbReference>
<dbReference type="InterPro" id="IPR011063">
    <property type="entry name" value="TilS/TtcA_N"/>
</dbReference>
<dbReference type="InterPro" id="IPR012094">
    <property type="entry name" value="tRNA_Ile_lys_synt"/>
</dbReference>
<dbReference type="InterPro" id="IPR012795">
    <property type="entry name" value="tRNA_Ile_lys_synt_N"/>
</dbReference>
<dbReference type="InterPro" id="IPR015262">
    <property type="entry name" value="tRNA_Ile_lys_synt_subst-bd"/>
</dbReference>
<dbReference type="NCBIfam" id="TIGR02433">
    <property type="entry name" value="lysidine_TilS_C"/>
    <property type="match status" value="1"/>
</dbReference>
<dbReference type="NCBIfam" id="TIGR02432">
    <property type="entry name" value="lysidine_TilS_N"/>
    <property type="match status" value="1"/>
</dbReference>
<dbReference type="PANTHER" id="PTHR43033">
    <property type="entry name" value="TRNA(ILE)-LYSIDINE SYNTHASE-RELATED"/>
    <property type="match status" value="1"/>
</dbReference>
<dbReference type="PANTHER" id="PTHR43033:SF1">
    <property type="entry name" value="TRNA(ILE)-LYSIDINE SYNTHASE-RELATED"/>
    <property type="match status" value="1"/>
</dbReference>
<dbReference type="Pfam" id="PF01171">
    <property type="entry name" value="ATP_bind_3"/>
    <property type="match status" value="1"/>
</dbReference>
<dbReference type="Pfam" id="PF09179">
    <property type="entry name" value="TilS"/>
    <property type="match status" value="1"/>
</dbReference>
<dbReference type="Pfam" id="PF11734">
    <property type="entry name" value="TilS_C"/>
    <property type="match status" value="1"/>
</dbReference>
<dbReference type="SMART" id="SM00977">
    <property type="entry name" value="TilS_C"/>
    <property type="match status" value="1"/>
</dbReference>
<dbReference type="SUPFAM" id="SSF52402">
    <property type="entry name" value="Adenine nucleotide alpha hydrolases-like"/>
    <property type="match status" value="1"/>
</dbReference>
<dbReference type="SUPFAM" id="SSF82829">
    <property type="entry name" value="MesJ substrate recognition domain-like"/>
    <property type="match status" value="1"/>
</dbReference>
<dbReference type="SUPFAM" id="SSF56037">
    <property type="entry name" value="PheT/TilS domain"/>
    <property type="match status" value="1"/>
</dbReference>
<proteinExistence type="inferred from homology"/>
<keyword id="KW-0067">ATP-binding</keyword>
<keyword id="KW-0963">Cytoplasm</keyword>
<keyword id="KW-0436">Ligase</keyword>
<keyword id="KW-0547">Nucleotide-binding</keyword>
<keyword id="KW-1185">Reference proteome</keyword>
<keyword id="KW-0819">tRNA processing</keyword>
<sequence length="470" mass="52772">MTEPSFNTSALIEESIKSAKINVGAKLVLAYSGGVDSEVLAQGLSLYAKSHPEFRYLLVHVHHGLSRNADAWVTHCQKQALDYQLPIEVVQVQVKTGPRLSIEAEARRARYKAITSLMDSADVLLTAHHLDDQLETVLLALKRGLGPKGLSAMGALQVFDGDKQLLRPLLNVSREQIEAKAASLSLPHIEDESNTDDKYDRNFLRLQIIPKLKSRWSAIATTASRSAALCAQQQAVIDDEVSARLPNFIELVPYGEGTALNLDLLSHQTPNWQALLLRGYIESSGFAPVSQIQLEQLLSQLLTAKPDANLEVRIADMLVRRFREKAYLSSYRPHKPKSLESIELTLESEVHFVQEINIPLLSNIRVEVLEDDGGERVRLPLIEEKVSVRFSAVGSLRCHPHNRQKGRELKKLWQEYGVPPWERERVPLIFYNEKLVCAVGYWVEHSFQSAEHETGLRFSIAIVSNECESI</sequence>
<evidence type="ECO:0000255" key="1">
    <source>
        <dbReference type="HAMAP-Rule" id="MF_01161"/>
    </source>
</evidence>
<name>TILS_SHEWM</name>
<protein>
    <recommendedName>
        <fullName evidence="1">tRNA(Ile)-lysidine synthase</fullName>
        <ecNumber evidence="1">6.3.4.19</ecNumber>
    </recommendedName>
    <alternativeName>
        <fullName evidence="1">tRNA(Ile)-2-lysyl-cytidine synthase</fullName>
    </alternativeName>
    <alternativeName>
        <fullName evidence="1">tRNA(Ile)-lysidine synthetase</fullName>
    </alternativeName>
</protein>
<comment type="function">
    <text evidence="1">Ligates lysine onto the cytidine present at position 34 of the AUA codon-specific tRNA(Ile) that contains the anticodon CAU, in an ATP-dependent manner. Cytidine is converted to lysidine, thus changing the amino acid specificity of the tRNA from methionine to isoleucine.</text>
</comment>
<comment type="catalytic activity">
    <reaction evidence="1">
        <text>cytidine(34) in tRNA(Ile2) + L-lysine + ATP = lysidine(34) in tRNA(Ile2) + AMP + diphosphate + H(+)</text>
        <dbReference type="Rhea" id="RHEA:43744"/>
        <dbReference type="Rhea" id="RHEA-COMP:10625"/>
        <dbReference type="Rhea" id="RHEA-COMP:10670"/>
        <dbReference type="ChEBI" id="CHEBI:15378"/>
        <dbReference type="ChEBI" id="CHEBI:30616"/>
        <dbReference type="ChEBI" id="CHEBI:32551"/>
        <dbReference type="ChEBI" id="CHEBI:33019"/>
        <dbReference type="ChEBI" id="CHEBI:82748"/>
        <dbReference type="ChEBI" id="CHEBI:83665"/>
        <dbReference type="ChEBI" id="CHEBI:456215"/>
        <dbReference type="EC" id="6.3.4.19"/>
    </reaction>
</comment>
<comment type="subcellular location">
    <subcellularLocation>
        <location evidence="1">Cytoplasm</location>
    </subcellularLocation>
</comment>
<comment type="domain">
    <text>The N-terminal region contains the highly conserved SGGXDS motif, predicted to be a P-loop motif involved in ATP binding.</text>
</comment>
<comment type="similarity">
    <text evidence="1">Belongs to the tRNA(Ile)-lysidine synthase family.</text>
</comment>